<name>CCF12_ORYSJ</name>
<organism>
    <name type="scientific">Oryza sativa subsp. japonica</name>
    <name type="common">Rice</name>
    <dbReference type="NCBI Taxonomy" id="39947"/>
    <lineage>
        <taxon>Eukaryota</taxon>
        <taxon>Viridiplantae</taxon>
        <taxon>Streptophyta</taxon>
        <taxon>Embryophyta</taxon>
        <taxon>Tracheophyta</taxon>
        <taxon>Spermatophyta</taxon>
        <taxon>Magnoliopsida</taxon>
        <taxon>Liliopsida</taxon>
        <taxon>Poales</taxon>
        <taxon>Poaceae</taxon>
        <taxon>BOP clade</taxon>
        <taxon>Oryzoideae</taxon>
        <taxon>Oryzeae</taxon>
        <taxon>Oryzinae</taxon>
        <taxon>Oryza</taxon>
        <taxon>Oryza sativa</taxon>
    </lineage>
</organism>
<reference key="1">
    <citation type="journal article" date="2005" name="Nature">
        <title>The map-based sequence of the rice genome.</title>
        <authorList>
            <consortium name="International rice genome sequencing project (IRGSP)"/>
        </authorList>
    </citation>
    <scope>NUCLEOTIDE SEQUENCE [LARGE SCALE GENOMIC DNA]</scope>
    <source>
        <strain>cv. Nipponbare</strain>
    </source>
</reference>
<reference key="2">
    <citation type="journal article" date="2013" name="Rice">
        <title>Improvement of the Oryza sativa Nipponbare reference genome using next generation sequence and optical map data.</title>
        <authorList>
            <person name="Kawahara Y."/>
            <person name="de la Bastide M."/>
            <person name="Hamilton J.P."/>
            <person name="Kanamori H."/>
            <person name="McCombie W.R."/>
            <person name="Ouyang S."/>
            <person name="Schwartz D.C."/>
            <person name="Tanaka T."/>
            <person name="Wu J."/>
            <person name="Zhou S."/>
            <person name="Childs K.L."/>
            <person name="Davidson R.M."/>
            <person name="Lin H."/>
            <person name="Quesada-Ocampo L."/>
            <person name="Vaillancourt B."/>
            <person name="Sakai H."/>
            <person name="Lee S.S."/>
            <person name="Kim J."/>
            <person name="Numa H."/>
            <person name="Itoh T."/>
            <person name="Buell C.R."/>
            <person name="Matsumoto T."/>
        </authorList>
    </citation>
    <scope>GENOME REANNOTATION</scope>
    <source>
        <strain>cv. Nipponbare</strain>
    </source>
</reference>
<reference key="3">
    <citation type="journal article" date="2006" name="Mol. Genet. Genomics">
        <title>Genome-wide analysis of cyclin family in rice (Oryza sativa L.).</title>
        <authorList>
            <person name="La H."/>
            <person name="Li J."/>
            <person name="Ji Z."/>
            <person name="Cheng Y."/>
            <person name="Li X."/>
            <person name="Jiang S."/>
            <person name="Venkatesh P.N."/>
            <person name="Ramachandran S."/>
        </authorList>
    </citation>
    <scope>GENE FAMILY</scope>
    <scope>NOMENCLATURE</scope>
</reference>
<dbReference type="EMBL" id="AP004111">
    <property type="protein sequence ID" value="BAD19317.1"/>
    <property type="molecule type" value="Genomic_DNA"/>
</dbReference>
<dbReference type="EMBL" id="AP014958">
    <property type="status" value="NOT_ANNOTATED_CDS"/>
    <property type="molecule type" value="Genomic_DNA"/>
</dbReference>
<dbReference type="SMR" id="Q6K8S5"/>
<dbReference type="FunCoup" id="Q6K8S5">
    <property type="interactions" value="29"/>
</dbReference>
<dbReference type="STRING" id="39947.Q6K8S5"/>
<dbReference type="PaxDb" id="39947-Q6K8S5"/>
<dbReference type="eggNOG" id="KOG0654">
    <property type="taxonomic scope" value="Eukaryota"/>
</dbReference>
<dbReference type="HOGENOM" id="CLU_052910_1_0_1"/>
<dbReference type="InParanoid" id="Q6K8S5"/>
<dbReference type="Proteomes" id="UP000000763">
    <property type="component" value="Chromosome 2"/>
</dbReference>
<dbReference type="Proteomes" id="UP000059680">
    <property type="component" value="Chromosome 2"/>
</dbReference>
<dbReference type="GO" id="GO:0000307">
    <property type="term" value="C:cyclin-dependent protein kinase holoenzyme complex"/>
    <property type="evidence" value="ECO:0000318"/>
    <property type="project" value="GO_Central"/>
</dbReference>
<dbReference type="GO" id="GO:0005737">
    <property type="term" value="C:cytoplasm"/>
    <property type="evidence" value="ECO:0000318"/>
    <property type="project" value="GO_Central"/>
</dbReference>
<dbReference type="GO" id="GO:0005634">
    <property type="term" value="C:nucleus"/>
    <property type="evidence" value="ECO:0000318"/>
    <property type="project" value="GO_Central"/>
</dbReference>
<dbReference type="GO" id="GO:0016538">
    <property type="term" value="F:cyclin-dependent protein serine/threonine kinase regulator activity"/>
    <property type="evidence" value="ECO:0000318"/>
    <property type="project" value="GO_Central"/>
</dbReference>
<dbReference type="GO" id="GO:0051301">
    <property type="term" value="P:cell division"/>
    <property type="evidence" value="ECO:0007669"/>
    <property type="project" value="UniProtKB-KW"/>
</dbReference>
<dbReference type="GO" id="GO:0000082">
    <property type="term" value="P:G1/S transition of mitotic cell cycle"/>
    <property type="evidence" value="ECO:0000318"/>
    <property type="project" value="GO_Central"/>
</dbReference>
<dbReference type="FunFam" id="1.10.472.10:FF:000115">
    <property type="entry name" value="Os02g0607400 protein"/>
    <property type="match status" value="1"/>
</dbReference>
<dbReference type="FunFam" id="1.10.472.10:FF:000133">
    <property type="entry name" value="Putative cyclin-F1-2"/>
    <property type="match status" value="1"/>
</dbReference>
<dbReference type="Gene3D" id="1.10.472.10">
    <property type="entry name" value="Cyclin-like"/>
    <property type="match status" value="2"/>
</dbReference>
<dbReference type="InterPro" id="IPR039361">
    <property type="entry name" value="Cyclin"/>
</dbReference>
<dbReference type="InterPro" id="IPR013763">
    <property type="entry name" value="Cyclin-like_dom"/>
</dbReference>
<dbReference type="InterPro" id="IPR036915">
    <property type="entry name" value="Cyclin-like_sf"/>
</dbReference>
<dbReference type="InterPro" id="IPR004367">
    <property type="entry name" value="Cyclin_C-dom"/>
</dbReference>
<dbReference type="InterPro" id="IPR006671">
    <property type="entry name" value="Cyclin_N"/>
</dbReference>
<dbReference type="PANTHER" id="PTHR10177">
    <property type="entry name" value="CYCLINS"/>
    <property type="match status" value="1"/>
</dbReference>
<dbReference type="Pfam" id="PF02984">
    <property type="entry name" value="Cyclin_C"/>
    <property type="match status" value="1"/>
</dbReference>
<dbReference type="Pfam" id="PF00134">
    <property type="entry name" value="Cyclin_N"/>
    <property type="match status" value="1"/>
</dbReference>
<dbReference type="SMART" id="SM00385">
    <property type="entry name" value="CYCLIN"/>
    <property type="match status" value="2"/>
</dbReference>
<dbReference type="SMART" id="SM01332">
    <property type="entry name" value="Cyclin_C"/>
    <property type="match status" value="1"/>
</dbReference>
<dbReference type="SUPFAM" id="SSF47954">
    <property type="entry name" value="Cyclin-like"/>
    <property type="match status" value="2"/>
</dbReference>
<feature type="chain" id="PRO_0000287042" description="Putative cyclin-F1-2">
    <location>
        <begin position="1"/>
        <end position="359"/>
    </location>
</feature>
<accession>Q6K8S5</accession>
<proteinExistence type="inferred from homology"/>
<comment type="similarity">
    <text evidence="1">Belongs to the cyclin family. Cyclin F subfamily.</text>
</comment>
<sequence>MFGPYSGGGGVPLPQMDADTYVRTIAAMPPHPLAPPPDSPRTPHTYVGFLPVFGDLPPLTGAVLQEPVPVPPEQRADQPVAVATENSAPTRPQLCAPYDDEVEATLRAMETNPAERPSPYFLETTQGGRMSALVRASMIAFMGEFSRKNKLADGTLQRAAYFLDRYLSVTPESDDALQLRLVGATAVFLAAKYEDQYTLRKIDASMVAARCGYTSETRHKMVSIMETEMLAALGFNLGGPTAYTFVEHFTRYYGDGEEEKQLKEAAHRVADGTLLTYGFHRYLPSMVAASSIFLARLHELGHEPWSNDLAELTGYKAIDLMGCVCDIYSQIACPRFALLQGKNKRVCKSTSMQGMNMMA</sequence>
<gene>
    <name type="primary">CYCF1-2</name>
    <name type="ordered locus">Os02g0604600</name>
    <name type="ordered locus">LOC_Os02g39220</name>
    <name type="ORF">OJ1058_F07.4</name>
</gene>
<keyword id="KW-0131">Cell cycle</keyword>
<keyword id="KW-0132">Cell division</keyword>
<keyword id="KW-0195">Cyclin</keyword>
<keyword id="KW-1185">Reference proteome</keyword>
<protein>
    <recommendedName>
        <fullName>Putative cyclin-F1-2</fullName>
        <shortName>CycF1;2</shortName>
    </recommendedName>
</protein>
<evidence type="ECO:0000305" key="1"/>